<name>HSP1_SMIGR</name>
<organism>
    <name type="scientific">Sminthopsis griseoventer</name>
    <name type="common">Gray-bellied dunnart</name>
    <dbReference type="NCBI Taxonomy" id="75756"/>
    <lineage>
        <taxon>Eukaryota</taxon>
        <taxon>Metazoa</taxon>
        <taxon>Chordata</taxon>
        <taxon>Craniata</taxon>
        <taxon>Vertebrata</taxon>
        <taxon>Euteleostomi</taxon>
        <taxon>Mammalia</taxon>
        <taxon>Metatheria</taxon>
        <taxon>Dasyuromorphia</taxon>
        <taxon>Dasyuridae</taxon>
        <taxon>Sminthopsis</taxon>
    </lineage>
</organism>
<accession>Q9TUC3</accession>
<dbReference type="EMBL" id="AF089878">
    <property type="protein sequence ID" value="AAD55337.1"/>
    <property type="molecule type" value="Genomic_DNA"/>
</dbReference>
<dbReference type="GO" id="GO:0000786">
    <property type="term" value="C:nucleosome"/>
    <property type="evidence" value="ECO:0007669"/>
    <property type="project" value="UniProtKB-KW"/>
</dbReference>
<dbReference type="GO" id="GO:0005634">
    <property type="term" value="C:nucleus"/>
    <property type="evidence" value="ECO:0007669"/>
    <property type="project" value="UniProtKB-SubCell"/>
</dbReference>
<dbReference type="GO" id="GO:0003677">
    <property type="term" value="F:DNA binding"/>
    <property type="evidence" value="ECO:0007669"/>
    <property type="project" value="UniProtKB-KW"/>
</dbReference>
<dbReference type="GO" id="GO:0030261">
    <property type="term" value="P:chromosome condensation"/>
    <property type="evidence" value="ECO:0007669"/>
    <property type="project" value="UniProtKB-KW"/>
</dbReference>
<dbReference type="GO" id="GO:0035092">
    <property type="term" value="P:sperm DNA condensation"/>
    <property type="evidence" value="ECO:0007669"/>
    <property type="project" value="InterPro"/>
</dbReference>
<dbReference type="InterPro" id="IPR000221">
    <property type="entry name" value="Protamine_P1"/>
</dbReference>
<dbReference type="PROSITE" id="PS00048">
    <property type="entry name" value="PROTAMINE_P1"/>
    <property type="match status" value="1"/>
</dbReference>
<gene>
    <name type="primary">PRM1</name>
</gene>
<protein>
    <recommendedName>
        <fullName>Sperm protamine P1</fullName>
    </recommendedName>
</protein>
<evidence type="ECO:0000250" key="1"/>
<evidence type="ECO:0000256" key="2">
    <source>
        <dbReference type="SAM" id="MobiDB-lite"/>
    </source>
</evidence>
<evidence type="ECO:0000305" key="3"/>
<feature type="chain" id="PRO_0000191566" description="Sperm protamine P1">
    <location>
        <begin position="1"/>
        <end position="63"/>
    </location>
</feature>
<feature type="region of interest" description="Disordered" evidence="2">
    <location>
        <begin position="1"/>
        <end position="63"/>
    </location>
</feature>
<keyword id="KW-0158">Chromosome</keyword>
<keyword id="KW-0217">Developmental protein</keyword>
<keyword id="KW-0221">Differentiation</keyword>
<keyword id="KW-0226">DNA condensation</keyword>
<keyword id="KW-0238">DNA-binding</keyword>
<keyword id="KW-0544">Nucleosome core</keyword>
<keyword id="KW-0539">Nucleus</keyword>
<keyword id="KW-0744">Spermatogenesis</keyword>
<reference key="1">
    <citation type="journal article" date="1999" name="Mol. Phylogenet. Evol.">
        <title>Systematic relationships within the dasyurid marsupial tribe Sminthopsini -- a multigene approach.</title>
        <authorList>
            <person name="Blacket M.J."/>
            <person name="Krajewski C."/>
            <person name="Labrinidis A."/>
            <person name="Cambron B."/>
            <person name="Cooper S."/>
            <person name="Westerman M."/>
        </authorList>
    </citation>
    <scope>NUCLEOTIDE SEQUENCE [GENOMIC DNA]</scope>
</reference>
<proteinExistence type="evidence at transcript level"/>
<comment type="function">
    <text evidence="1">Protamines substitute for histones in the chromatin of sperm during the haploid phase of spermatogenesis. They compact sperm DNA into a highly condensed, stable and inactive complex (By similarity).</text>
</comment>
<comment type="subcellular location">
    <subcellularLocation>
        <location evidence="1">Nucleus</location>
    </subcellularLocation>
    <subcellularLocation>
        <location evidence="1">Chromosome</location>
    </subcellularLocation>
</comment>
<comment type="tissue specificity">
    <text>Testis.</text>
</comment>
<comment type="similarity">
    <text evidence="3">Belongs to the protamine P1 family.</text>
</comment>
<sequence>MARYRRHSRSRSRSRYRRRRRRRSRHHNRRRTYRRSRRHSRRRRRRRRGYSRRRYSRRGRRRY</sequence>